<keyword id="KW-1185">Reference proteome</keyword>
<keyword id="KW-0687">Ribonucleoprotein</keyword>
<keyword id="KW-0689">Ribosomal protein</keyword>
<keyword id="KW-0694">RNA-binding</keyword>
<keyword id="KW-0699">rRNA-binding</keyword>
<accession>Q3AW71</accession>
<gene>
    <name evidence="1" type="primary">rpsK</name>
    <name evidence="1" type="synonym">rps11</name>
    <name type="ordered locus">Syncc9902_1977</name>
</gene>
<feature type="chain" id="PRO_0000294875" description="Small ribosomal subunit protein uS11">
    <location>
        <begin position="1"/>
        <end position="130"/>
    </location>
</feature>
<sequence length="130" mass="13782">MAKTAKKSGPKKAKRNVPNGVAHIQSTFNNTIVSISDTAGEIIAWSSAGASGFKGARKGTPFAAQTAAEAAARRALEQGMRQIEVLVRGPGSGRETAIRALQVAGLEITLIRDVTPLPHNGCRRPKRRRV</sequence>
<comment type="function">
    <text evidence="1">Located on the platform of the 30S subunit, it bridges several disparate RNA helices of the 16S rRNA. Forms part of the Shine-Dalgarno cleft in the 70S ribosome.</text>
</comment>
<comment type="subunit">
    <text evidence="1">Part of the 30S ribosomal subunit. Interacts with proteins S7 and S18. Binds to IF-3.</text>
</comment>
<comment type="similarity">
    <text evidence="1">Belongs to the universal ribosomal protein uS11 family.</text>
</comment>
<proteinExistence type="inferred from homology"/>
<dbReference type="EMBL" id="CP000097">
    <property type="protein sequence ID" value="ABB26935.1"/>
    <property type="molecule type" value="Genomic_DNA"/>
</dbReference>
<dbReference type="RefSeq" id="WP_011360730.1">
    <property type="nucleotide sequence ID" value="NC_007513.1"/>
</dbReference>
<dbReference type="SMR" id="Q3AW71"/>
<dbReference type="STRING" id="316279.Syncc9902_1977"/>
<dbReference type="KEGG" id="sye:Syncc9902_1977"/>
<dbReference type="eggNOG" id="COG0100">
    <property type="taxonomic scope" value="Bacteria"/>
</dbReference>
<dbReference type="HOGENOM" id="CLU_072439_5_0_3"/>
<dbReference type="OrthoDB" id="9806415at2"/>
<dbReference type="Proteomes" id="UP000002712">
    <property type="component" value="Chromosome"/>
</dbReference>
<dbReference type="GO" id="GO:1990904">
    <property type="term" value="C:ribonucleoprotein complex"/>
    <property type="evidence" value="ECO:0007669"/>
    <property type="project" value="UniProtKB-KW"/>
</dbReference>
<dbReference type="GO" id="GO:0005840">
    <property type="term" value="C:ribosome"/>
    <property type="evidence" value="ECO:0007669"/>
    <property type="project" value="UniProtKB-KW"/>
</dbReference>
<dbReference type="GO" id="GO:0019843">
    <property type="term" value="F:rRNA binding"/>
    <property type="evidence" value="ECO:0007669"/>
    <property type="project" value="UniProtKB-UniRule"/>
</dbReference>
<dbReference type="GO" id="GO:0003735">
    <property type="term" value="F:structural constituent of ribosome"/>
    <property type="evidence" value="ECO:0007669"/>
    <property type="project" value="InterPro"/>
</dbReference>
<dbReference type="GO" id="GO:0006412">
    <property type="term" value="P:translation"/>
    <property type="evidence" value="ECO:0007669"/>
    <property type="project" value="UniProtKB-UniRule"/>
</dbReference>
<dbReference type="FunFam" id="3.30.420.80:FF:000001">
    <property type="entry name" value="30S ribosomal protein S11"/>
    <property type="match status" value="1"/>
</dbReference>
<dbReference type="Gene3D" id="3.30.420.80">
    <property type="entry name" value="Ribosomal protein S11"/>
    <property type="match status" value="1"/>
</dbReference>
<dbReference type="HAMAP" id="MF_01310">
    <property type="entry name" value="Ribosomal_uS11"/>
    <property type="match status" value="1"/>
</dbReference>
<dbReference type="InterPro" id="IPR001971">
    <property type="entry name" value="Ribosomal_uS11"/>
</dbReference>
<dbReference type="InterPro" id="IPR019981">
    <property type="entry name" value="Ribosomal_uS11_bac-type"/>
</dbReference>
<dbReference type="InterPro" id="IPR018102">
    <property type="entry name" value="Ribosomal_uS11_CS"/>
</dbReference>
<dbReference type="InterPro" id="IPR036967">
    <property type="entry name" value="Ribosomal_uS11_sf"/>
</dbReference>
<dbReference type="NCBIfam" id="NF003698">
    <property type="entry name" value="PRK05309.1"/>
    <property type="match status" value="1"/>
</dbReference>
<dbReference type="NCBIfam" id="TIGR03632">
    <property type="entry name" value="uS11_bact"/>
    <property type="match status" value="1"/>
</dbReference>
<dbReference type="PANTHER" id="PTHR11759">
    <property type="entry name" value="40S RIBOSOMAL PROTEIN S14/30S RIBOSOMAL PROTEIN S11"/>
    <property type="match status" value="1"/>
</dbReference>
<dbReference type="Pfam" id="PF00411">
    <property type="entry name" value="Ribosomal_S11"/>
    <property type="match status" value="1"/>
</dbReference>
<dbReference type="PIRSF" id="PIRSF002131">
    <property type="entry name" value="Ribosomal_S11"/>
    <property type="match status" value="1"/>
</dbReference>
<dbReference type="SUPFAM" id="SSF53137">
    <property type="entry name" value="Translational machinery components"/>
    <property type="match status" value="1"/>
</dbReference>
<dbReference type="PROSITE" id="PS00054">
    <property type="entry name" value="RIBOSOMAL_S11"/>
    <property type="match status" value="1"/>
</dbReference>
<name>RS11_SYNS9</name>
<organism>
    <name type="scientific">Synechococcus sp. (strain CC9902)</name>
    <dbReference type="NCBI Taxonomy" id="316279"/>
    <lineage>
        <taxon>Bacteria</taxon>
        <taxon>Bacillati</taxon>
        <taxon>Cyanobacteriota</taxon>
        <taxon>Cyanophyceae</taxon>
        <taxon>Synechococcales</taxon>
        <taxon>Synechococcaceae</taxon>
        <taxon>Synechococcus</taxon>
    </lineage>
</organism>
<evidence type="ECO:0000255" key="1">
    <source>
        <dbReference type="HAMAP-Rule" id="MF_01310"/>
    </source>
</evidence>
<evidence type="ECO:0000305" key="2"/>
<protein>
    <recommendedName>
        <fullName evidence="1">Small ribosomal subunit protein uS11</fullName>
    </recommendedName>
    <alternativeName>
        <fullName evidence="2">30S ribosomal protein S11</fullName>
    </alternativeName>
</protein>
<reference key="1">
    <citation type="submission" date="2005-08" db="EMBL/GenBank/DDBJ databases">
        <title>Complete sequence of Synechococcus sp. CC9902.</title>
        <authorList>
            <person name="Copeland A."/>
            <person name="Lucas S."/>
            <person name="Lapidus A."/>
            <person name="Barry K."/>
            <person name="Detter J.C."/>
            <person name="Glavina T."/>
            <person name="Hammon N."/>
            <person name="Israni S."/>
            <person name="Pitluck S."/>
            <person name="Martinez M."/>
            <person name="Schmutz J."/>
            <person name="Larimer F."/>
            <person name="Land M."/>
            <person name="Kyrpides N."/>
            <person name="Ivanova N."/>
            <person name="Richardson P."/>
        </authorList>
    </citation>
    <scope>NUCLEOTIDE SEQUENCE [LARGE SCALE GENOMIC DNA]</scope>
    <source>
        <strain>CC9902</strain>
    </source>
</reference>